<dbReference type="EMBL" id="AJ131564">
    <property type="protein sequence ID" value="CAB39165.1"/>
    <property type="molecule type" value="mRNA"/>
</dbReference>
<dbReference type="EMBL" id="AE014297">
    <property type="protein sequence ID" value="AAF56799.1"/>
    <property type="molecule type" value="Genomic_DNA"/>
</dbReference>
<dbReference type="EMBL" id="AY122179">
    <property type="protein sequence ID" value="AAM52691.1"/>
    <property type="molecule type" value="mRNA"/>
</dbReference>
<dbReference type="RefSeq" id="NP_651622.2">
    <property type="nucleotide sequence ID" value="NM_143365.3"/>
</dbReference>
<dbReference type="BioGRID" id="68260">
    <property type="interactions" value="27"/>
</dbReference>
<dbReference type="DIP" id="DIP-17066N"/>
<dbReference type="FunCoup" id="Q9VAU9">
    <property type="interactions" value="1396"/>
</dbReference>
<dbReference type="IntAct" id="Q9VAU9">
    <property type="interactions" value="20"/>
</dbReference>
<dbReference type="STRING" id="7227.FBpp0084689"/>
<dbReference type="PaxDb" id="7227-FBpp0084689"/>
<dbReference type="DNASU" id="43384"/>
<dbReference type="EnsemblMetazoa" id="FBtr0085320">
    <property type="protein sequence ID" value="FBpp0084689"/>
    <property type="gene ID" value="FBgn0026400"/>
</dbReference>
<dbReference type="GeneID" id="43384"/>
<dbReference type="KEGG" id="dme:Dmel_CG10009"/>
<dbReference type="AGR" id="FB:FBgn0026400"/>
<dbReference type="CTD" id="43384"/>
<dbReference type="FlyBase" id="FBgn0026400">
    <property type="gene designation" value="Noa36"/>
</dbReference>
<dbReference type="VEuPathDB" id="VectorBase:FBgn0026400"/>
<dbReference type="eggNOG" id="ENOG502QRJT">
    <property type="taxonomic scope" value="Eukaryota"/>
</dbReference>
<dbReference type="GeneTree" id="ENSGT00390000017043"/>
<dbReference type="HOGENOM" id="CLU_074902_0_0_1"/>
<dbReference type="InParanoid" id="Q9VAU9"/>
<dbReference type="OMA" id="CFCDEHV"/>
<dbReference type="OrthoDB" id="10258894at2759"/>
<dbReference type="PhylomeDB" id="Q9VAU9"/>
<dbReference type="SignaLink" id="Q9VAU9"/>
<dbReference type="BioGRID-ORCS" id="43384">
    <property type="hits" value="0 hits in 1 CRISPR screen"/>
</dbReference>
<dbReference type="ChiTaRS" id="Noa36">
    <property type="organism name" value="fly"/>
</dbReference>
<dbReference type="GenomeRNAi" id="43384"/>
<dbReference type="PRO" id="PR:Q9VAU9"/>
<dbReference type="Proteomes" id="UP000000803">
    <property type="component" value="Chromosome 3R"/>
</dbReference>
<dbReference type="Bgee" id="FBgn0026400">
    <property type="expression patterns" value="Expressed in egg cell and 138 other cell types or tissues"/>
</dbReference>
<dbReference type="GO" id="GO:0000775">
    <property type="term" value="C:chromosome, centromeric region"/>
    <property type="evidence" value="ECO:0000250"/>
    <property type="project" value="UniProtKB"/>
</dbReference>
<dbReference type="GO" id="GO:0030496">
    <property type="term" value="C:midbody"/>
    <property type="evidence" value="ECO:0000250"/>
    <property type="project" value="UniProtKB"/>
</dbReference>
<dbReference type="GO" id="GO:0005730">
    <property type="term" value="C:nucleolus"/>
    <property type="evidence" value="ECO:0000250"/>
    <property type="project" value="UniProtKB"/>
</dbReference>
<dbReference type="GO" id="GO:0005634">
    <property type="term" value="C:nucleus"/>
    <property type="evidence" value="ECO:0000318"/>
    <property type="project" value="GO_Central"/>
</dbReference>
<dbReference type="GO" id="GO:0008270">
    <property type="term" value="F:zinc ion binding"/>
    <property type="evidence" value="ECO:0007669"/>
    <property type="project" value="UniProtKB-KW"/>
</dbReference>
<dbReference type="GO" id="GO:0035167">
    <property type="term" value="P:larval lymph gland hemopoiesis"/>
    <property type="evidence" value="ECO:0000315"/>
    <property type="project" value="FlyBase"/>
</dbReference>
<dbReference type="InterPro" id="IPR010531">
    <property type="entry name" value="NOA36"/>
</dbReference>
<dbReference type="PANTHER" id="PTHR13214">
    <property type="entry name" value="ZINC FINGER PROTEIN 330"/>
    <property type="match status" value="1"/>
</dbReference>
<dbReference type="PANTHER" id="PTHR13214:SF1">
    <property type="entry name" value="ZINC FINGER PROTEIN 330"/>
    <property type="match status" value="1"/>
</dbReference>
<dbReference type="Pfam" id="PF06524">
    <property type="entry name" value="NOA36"/>
    <property type="match status" value="1"/>
</dbReference>
<proteinExistence type="evidence at transcript level"/>
<evidence type="ECO:0000250" key="1"/>
<evidence type="ECO:0000255" key="2"/>
<evidence type="ECO:0000256" key="3">
    <source>
        <dbReference type="SAM" id="MobiDB-lite"/>
    </source>
</evidence>
<evidence type="ECO:0000305" key="4"/>
<comment type="subcellular location">
    <subcellularLocation>
        <location evidence="1">Nucleus</location>
    </subcellularLocation>
    <subcellularLocation>
        <location evidence="1">Nucleus</location>
        <location evidence="1">Nucleolus</location>
    </subcellularLocation>
    <text evidence="1">Predominantly expressed in the nucleolus.</text>
</comment>
<comment type="similarity">
    <text evidence="4">Belongs to the NOA36 family.</text>
</comment>
<keyword id="KW-0479">Metal-binding</keyword>
<keyword id="KW-0539">Nucleus</keyword>
<keyword id="KW-1185">Reference proteome</keyword>
<keyword id="KW-0677">Repeat</keyword>
<keyword id="KW-0862">Zinc</keyword>
<keyword id="KW-0863">Zinc-finger</keyword>
<organism>
    <name type="scientific">Drosophila melanogaster</name>
    <name type="common">Fruit fly</name>
    <dbReference type="NCBI Taxonomy" id="7227"/>
    <lineage>
        <taxon>Eukaryota</taxon>
        <taxon>Metazoa</taxon>
        <taxon>Ecdysozoa</taxon>
        <taxon>Arthropoda</taxon>
        <taxon>Hexapoda</taxon>
        <taxon>Insecta</taxon>
        <taxon>Pterygota</taxon>
        <taxon>Neoptera</taxon>
        <taxon>Endopterygota</taxon>
        <taxon>Diptera</taxon>
        <taxon>Brachycera</taxon>
        <taxon>Muscomorpha</taxon>
        <taxon>Ephydroidea</taxon>
        <taxon>Drosophilidae</taxon>
        <taxon>Drosophila</taxon>
        <taxon>Sophophora</taxon>
    </lineage>
</organism>
<gene>
    <name type="primary">Noa36</name>
    <name type="ORF">CG10009</name>
</gene>
<name>ZN330_DROME</name>
<accession>Q9VAU9</accession>
<accession>O97181</accession>
<feature type="chain" id="PRO_0000066589" description="Zinc finger protein 330 homolog">
    <location>
        <begin position="1"/>
        <end position="315"/>
    </location>
</feature>
<feature type="zinc finger region" description="C4-type 1" evidence="2">
    <location>
        <begin position="40"/>
        <end position="56"/>
    </location>
</feature>
<feature type="zinc finger region" description="C4-type 2" evidence="2">
    <location>
        <begin position="65"/>
        <end position="102"/>
    </location>
</feature>
<feature type="zinc finger region" description="C4-type 3" evidence="2">
    <location>
        <begin position="127"/>
        <end position="147"/>
    </location>
</feature>
<feature type="zinc finger region" description="C4-type 4" evidence="2">
    <location>
        <begin position="173"/>
        <end position="187"/>
    </location>
</feature>
<feature type="region of interest" description="Disordered" evidence="3">
    <location>
        <begin position="228"/>
        <end position="248"/>
    </location>
</feature>
<feature type="region of interest" description="Disordered" evidence="3">
    <location>
        <begin position="263"/>
        <end position="315"/>
    </location>
</feature>
<feature type="short sequence motif" description="Nuclear localization signal" evidence="2">
    <location>
        <begin position="3"/>
        <end position="11"/>
    </location>
</feature>
<feature type="compositionally biased region" description="Acidic residues" evidence="3">
    <location>
        <begin position="272"/>
        <end position="303"/>
    </location>
</feature>
<feature type="compositionally biased region" description="Basic and acidic residues" evidence="3">
    <location>
        <begin position="304"/>
        <end position="315"/>
    </location>
</feature>
<feature type="sequence conflict" description="In Ref. 1; CAB39165." evidence="4" ref="1">
    <original>KL</original>
    <variation>NV</variation>
    <location>
        <begin position="16"/>
        <end position="17"/>
    </location>
</feature>
<feature type="sequence conflict" description="In Ref. 1; CAB39165." evidence="4" ref="1">
    <location>
        <begin position="256"/>
        <end position="257"/>
    </location>
</feature>
<reference key="1">
    <citation type="journal article" date="1999" name="J. Biol. Chem.">
        <title>Molecular cloning of a zinc finger autoantigen transiently associated with interphase nucleolus and mitotic centromeres and midbodies. Orthologous proteins with nine CXXC motifs highly conserved from nematodes to humans.</title>
        <authorList>
            <person name="Bolivar J."/>
            <person name="Diaz I."/>
            <person name="Iglesias C."/>
            <person name="Valdivia M.M."/>
        </authorList>
    </citation>
    <scope>NUCLEOTIDE SEQUENCE [MRNA]</scope>
    <source>
        <tissue>Embryo</tissue>
    </source>
</reference>
<reference key="2">
    <citation type="journal article" date="2000" name="Science">
        <title>The genome sequence of Drosophila melanogaster.</title>
        <authorList>
            <person name="Adams M.D."/>
            <person name="Celniker S.E."/>
            <person name="Holt R.A."/>
            <person name="Evans C.A."/>
            <person name="Gocayne J.D."/>
            <person name="Amanatides P.G."/>
            <person name="Scherer S.E."/>
            <person name="Li P.W."/>
            <person name="Hoskins R.A."/>
            <person name="Galle R.F."/>
            <person name="George R.A."/>
            <person name="Lewis S.E."/>
            <person name="Richards S."/>
            <person name="Ashburner M."/>
            <person name="Henderson S.N."/>
            <person name="Sutton G.G."/>
            <person name="Wortman J.R."/>
            <person name="Yandell M.D."/>
            <person name="Zhang Q."/>
            <person name="Chen L.X."/>
            <person name="Brandon R.C."/>
            <person name="Rogers Y.-H.C."/>
            <person name="Blazej R.G."/>
            <person name="Champe M."/>
            <person name="Pfeiffer B.D."/>
            <person name="Wan K.H."/>
            <person name="Doyle C."/>
            <person name="Baxter E.G."/>
            <person name="Helt G."/>
            <person name="Nelson C.R."/>
            <person name="Miklos G.L.G."/>
            <person name="Abril J.F."/>
            <person name="Agbayani A."/>
            <person name="An H.-J."/>
            <person name="Andrews-Pfannkoch C."/>
            <person name="Baldwin D."/>
            <person name="Ballew R.M."/>
            <person name="Basu A."/>
            <person name="Baxendale J."/>
            <person name="Bayraktaroglu L."/>
            <person name="Beasley E.M."/>
            <person name="Beeson K.Y."/>
            <person name="Benos P.V."/>
            <person name="Berman B.P."/>
            <person name="Bhandari D."/>
            <person name="Bolshakov S."/>
            <person name="Borkova D."/>
            <person name="Botchan M.R."/>
            <person name="Bouck J."/>
            <person name="Brokstein P."/>
            <person name="Brottier P."/>
            <person name="Burtis K.C."/>
            <person name="Busam D.A."/>
            <person name="Butler H."/>
            <person name="Cadieu E."/>
            <person name="Center A."/>
            <person name="Chandra I."/>
            <person name="Cherry J.M."/>
            <person name="Cawley S."/>
            <person name="Dahlke C."/>
            <person name="Davenport L.B."/>
            <person name="Davies P."/>
            <person name="de Pablos B."/>
            <person name="Delcher A."/>
            <person name="Deng Z."/>
            <person name="Mays A.D."/>
            <person name="Dew I."/>
            <person name="Dietz S.M."/>
            <person name="Dodson K."/>
            <person name="Doup L.E."/>
            <person name="Downes M."/>
            <person name="Dugan-Rocha S."/>
            <person name="Dunkov B.C."/>
            <person name="Dunn P."/>
            <person name="Durbin K.J."/>
            <person name="Evangelista C.C."/>
            <person name="Ferraz C."/>
            <person name="Ferriera S."/>
            <person name="Fleischmann W."/>
            <person name="Fosler C."/>
            <person name="Gabrielian A.E."/>
            <person name="Garg N.S."/>
            <person name="Gelbart W.M."/>
            <person name="Glasser K."/>
            <person name="Glodek A."/>
            <person name="Gong F."/>
            <person name="Gorrell J.H."/>
            <person name="Gu Z."/>
            <person name="Guan P."/>
            <person name="Harris M."/>
            <person name="Harris N.L."/>
            <person name="Harvey D.A."/>
            <person name="Heiman T.J."/>
            <person name="Hernandez J.R."/>
            <person name="Houck J."/>
            <person name="Hostin D."/>
            <person name="Houston K.A."/>
            <person name="Howland T.J."/>
            <person name="Wei M.-H."/>
            <person name="Ibegwam C."/>
            <person name="Jalali M."/>
            <person name="Kalush F."/>
            <person name="Karpen G.H."/>
            <person name="Ke Z."/>
            <person name="Kennison J.A."/>
            <person name="Ketchum K.A."/>
            <person name="Kimmel B.E."/>
            <person name="Kodira C.D."/>
            <person name="Kraft C.L."/>
            <person name="Kravitz S."/>
            <person name="Kulp D."/>
            <person name="Lai Z."/>
            <person name="Lasko P."/>
            <person name="Lei Y."/>
            <person name="Levitsky A.A."/>
            <person name="Li J.H."/>
            <person name="Li Z."/>
            <person name="Liang Y."/>
            <person name="Lin X."/>
            <person name="Liu X."/>
            <person name="Mattei B."/>
            <person name="McIntosh T.C."/>
            <person name="McLeod M.P."/>
            <person name="McPherson D."/>
            <person name="Merkulov G."/>
            <person name="Milshina N.V."/>
            <person name="Mobarry C."/>
            <person name="Morris J."/>
            <person name="Moshrefi A."/>
            <person name="Mount S.M."/>
            <person name="Moy M."/>
            <person name="Murphy B."/>
            <person name="Murphy L."/>
            <person name="Muzny D.M."/>
            <person name="Nelson D.L."/>
            <person name="Nelson D.R."/>
            <person name="Nelson K.A."/>
            <person name="Nixon K."/>
            <person name="Nusskern D.R."/>
            <person name="Pacleb J.M."/>
            <person name="Palazzolo M."/>
            <person name="Pittman G.S."/>
            <person name="Pan S."/>
            <person name="Pollard J."/>
            <person name="Puri V."/>
            <person name="Reese M.G."/>
            <person name="Reinert K."/>
            <person name="Remington K."/>
            <person name="Saunders R.D.C."/>
            <person name="Scheeler F."/>
            <person name="Shen H."/>
            <person name="Shue B.C."/>
            <person name="Siden-Kiamos I."/>
            <person name="Simpson M."/>
            <person name="Skupski M.P."/>
            <person name="Smith T.J."/>
            <person name="Spier E."/>
            <person name="Spradling A.C."/>
            <person name="Stapleton M."/>
            <person name="Strong R."/>
            <person name="Sun E."/>
            <person name="Svirskas R."/>
            <person name="Tector C."/>
            <person name="Turner R."/>
            <person name="Venter E."/>
            <person name="Wang A.H."/>
            <person name="Wang X."/>
            <person name="Wang Z.-Y."/>
            <person name="Wassarman D.A."/>
            <person name="Weinstock G.M."/>
            <person name="Weissenbach J."/>
            <person name="Williams S.M."/>
            <person name="Woodage T."/>
            <person name="Worley K.C."/>
            <person name="Wu D."/>
            <person name="Yang S."/>
            <person name="Yao Q.A."/>
            <person name="Ye J."/>
            <person name="Yeh R.-F."/>
            <person name="Zaveri J.S."/>
            <person name="Zhan M."/>
            <person name="Zhang G."/>
            <person name="Zhao Q."/>
            <person name="Zheng L."/>
            <person name="Zheng X.H."/>
            <person name="Zhong F.N."/>
            <person name="Zhong W."/>
            <person name="Zhou X."/>
            <person name="Zhu S.C."/>
            <person name="Zhu X."/>
            <person name="Smith H.O."/>
            <person name="Gibbs R.A."/>
            <person name="Myers E.W."/>
            <person name="Rubin G.M."/>
            <person name="Venter J.C."/>
        </authorList>
    </citation>
    <scope>NUCLEOTIDE SEQUENCE [LARGE SCALE GENOMIC DNA]</scope>
    <source>
        <strain>Berkeley</strain>
    </source>
</reference>
<reference key="3">
    <citation type="journal article" date="2002" name="Genome Biol.">
        <title>Annotation of the Drosophila melanogaster euchromatic genome: a systematic review.</title>
        <authorList>
            <person name="Misra S."/>
            <person name="Crosby M.A."/>
            <person name="Mungall C.J."/>
            <person name="Matthews B.B."/>
            <person name="Campbell K.S."/>
            <person name="Hradecky P."/>
            <person name="Huang Y."/>
            <person name="Kaminker J.S."/>
            <person name="Millburn G.H."/>
            <person name="Prochnik S.E."/>
            <person name="Smith C.D."/>
            <person name="Tupy J.L."/>
            <person name="Whitfield E.J."/>
            <person name="Bayraktaroglu L."/>
            <person name="Berman B.P."/>
            <person name="Bettencourt B.R."/>
            <person name="Celniker S.E."/>
            <person name="de Grey A.D.N.J."/>
            <person name="Drysdale R.A."/>
            <person name="Harris N.L."/>
            <person name="Richter J."/>
            <person name="Russo S."/>
            <person name="Schroeder A.J."/>
            <person name="Shu S.Q."/>
            <person name="Stapleton M."/>
            <person name="Yamada C."/>
            <person name="Ashburner M."/>
            <person name="Gelbart W.M."/>
            <person name="Rubin G.M."/>
            <person name="Lewis S.E."/>
        </authorList>
    </citation>
    <scope>GENOME REANNOTATION</scope>
    <source>
        <strain>Berkeley</strain>
    </source>
</reference>
<reference key="4">
    <citation type="journal article" date="2002" name="Genome Biol.">
        <title>A Drosophila full-length cDNA resource.</title>
        <authorList>
            <person name="Stapleton M."/>
            <person name="Carlson J.W."/>
            <person name="Brokstein P."/>
            <person name="Yu C."/>
            <person name="Champe M."/>
            <person name="George R.A."/>
            <person name="Guarin H."/>
            <person name="Kronmiller B."/>
            <person name="Pacleb J.M."/>
            <person name="Park S."/>
            <person name="Wan K.H."/>
            <person name="Rubin G.M."/>
            <person name="Celniker S.E."/>
        </authorList>
    </citation>
    <scope>NUCLEOTIDE SEQUENCE [LARGE SCALE MRNA]</scope>
    <source>
        <strain>Berkeley</strain>
        <tissue>Embryo</tissue>
    </source>
</reference>
<protein>
    <recommendedName>
        <fullName>Zinc finger protein 330 homolog</fullName>
    </recommendedName>
    <alternativeName>
        <fullName>Nucleolar autoantigen 36 homolog</fullName>
    </alternativeName>
</protein>
<sequence length="315" mass="35355">MPKKKTGQRKKAEKQKLRLKEIRSREVPLADLPCNAPMECDKCEKKQKSRAFCYFCQSIQRLPICAQCGKIKCMLKTGDCVVKHPGVYTTGLGMVGAICDFCEAWVCHGRKCLQNHACTCPLQNATCLECERGVWEHGGRIFKCSFCNGFLCEDDQFEHQASCQVLESENYKCQSCNKLGQYSCLRCKTCYCEDHVRRKGFKYDKNKPIPCPKCNYDTSVTKDLSMSTRSHKFGRQQQGGNSDDEEGYGGYYGAGGSGYYGGAASGGYSYGGDDDEDESDGDYDDESDEDDDDDEEEDETTESEPEKETDKKATK</sequence>